<proteinExistence type="predicted"/>
<organismHost>
    <name type="scientific">Microplitis demolitor</name>
    <name type="common">Parasitoid wasp</name>
    <dbReference type="NCBI Taxonomy" id="69319"/>
</organismHost>
<accession>Q5I134</accession>
<organism>
    <name type="scientific">Microplitis demolitor bracovirus (isolate Webb)</name>
    <name type="common">MdBV</name>
    <dbReference type="NCBI Taxonomy" id="654919"/>
    <lineage>
        <taxon>Viruses</taxon>
        <taxon>Viruses incertae sedis</taxon>
        <taxon>Polydnaviriformidae</taxon>
        <taxon>Bracoviriform</taxon>
        <taxon>Microplitis demolitor bracovirus</taxon>
    </lineage>
</organism>
<protein>
    <recommendedName>
        <fullName>Uncharacterized protein M2</fullName>
    </recommendedName>
</protein>
<name>YM2_MDBVW</name>
<dbReference type="EMBL" id="AY875688">
    <property type="protein sequence ID" value="AAW51800.1"/>
    <property type="molecule type" value="Genomic_DNA"/>
</dbReference>
<dbReference type="RefSeq" id="YP_239394.1">
    <property type="nucleotide sequence ID" value="NC_007038.1"/>
</dbReference>
<dbReference type="KEGG" id="vg:5075832"/>
<dbReference type="Proteomes" id="UP000008168">
    <property type="component" value="Genome"/>
</dbReference>
<sequence length="105" mass="12070">MPLKYTCYVPNEWANNSKAALKKTITKTACKQLVENGNIEGATMSLQNVTAKLVNYNYQPWMRKTGDDKNYPDPKQYFGMRMDCIYCTASKVSFHFLDLTKSQKP</sequence>
<keyword id="KW-1185">Reference proteome</keyword>
<gene>
    <name type="primary">M2</name>
</gene>
<feature type="chain" id="PRO_0000405401" description="Uncharacterized protein M2">
    <location>
        <begin position="1"/>
        <end position="105"/>
    </location>
</feature>
<reference key="1">
    <citation type="journal article" date="2006" name="Virology">
        <title>Polydnavirus genomes reflect their dual roles as mutualists and pathogens.</title>
        <authorList>
            <person name="Webb B.A."/>
            <person name="Strand M.R."/>
            <person name="Dickey S.E."/>
            <person name="Beck M.H."/>
            <person name="Hilgarth R.S."/>
            <person name="Barney W.E."/>
            <person name="Kadash K."/>
            <person name="Kroemer J.A."/>
            <person name="Lindstrom K.G."/>
            <person name="Rattanadechakul W."/>
            <person name="Shelby K.S."/>
            <person name="Thoetkiattikul H."/>
            <person name="Turnbull M.W."/>
            <person name="Witherell R.A."/>
        </authorList>
    </citation>
    <scope>NUCLEOTIDE SEQUENCE [GENOMIC DNA]</scope>
</reference>